<evidence type="ECO:0000255" key="1"/>
<evidence type="ECO:0000305" key="2"/>
<name>PMT1_ARATH</name>
<proteinExistence type="evidence at transcript level"/>
<comment type="subcellular location">
    <subcellularLocation>
        <location evidence="2">Golgi apparatus membrane</location>
        <topology evidence="2">Single-pass type II membrane protein</topology>
    </subcellularLocation>
</comment>
<comment type="miscellaneous">
    <text>Co-expressed with the galacturonosyltransferases GAUT8/QUASIMODO1 and GAUT9.</text>
</comment>
<comment type="similarity">
    <text evidence="2">Belongs to the methyltransferase superfamily.</text>
</comment>
<dbReference type="EC" id="2.1.1.-"/>
<dbReference type="EMBL" id="AB015474">
    <property type="protein sequence ID" value="BAB02273.1"/>
    <property type="molecule type" value="Genomic_DNA"/>
</dbReference>
<dbReference type="EMBL" id="CP002686">
    <property type="protein sequence ID" value="AEE76749.1"/>
    <property type="molecule type" value="Genomic_DNA"/>
</dbReference>
<dbReference type="EMBL" id="CP002686">
    <property type="protein sequence ID" value="ANM65095.1"/>
    <property type="molecule type" value="Genomic_DNA"/>
</dbReference>
<dbReference type="EMBL" id="AY035138">
    <property type="protein sequence ID" value="AAK59642.2"/>
    <property type="molecule type" value="mRNA"/>
</dbReference>
<dbReference type="EMBL" id="BT000890">
    <property type="protein sequence ID" value="AAN41290.1"/>
    <property type="molecule type" value="mRNA"/>
</dbReference>
<dbReference type="RefSeq" id="NP_001327090.1">
    <property type="nucleotide sequence ID" value="NM_001338623.1"/>
</dbReference>
<dbReference type="RefSeq" id="NP_566725.2">
    <property type="nucleotide sequence ID" value="NM_113232.5"/>
</dbReference>
<dbReference type="BioGRID" id="7242">
    <property type="interactions" value="1"/>
</dbReference>
<dbReference type="FunCoup" id="Q8H118">
    <property type="interactions" value="1302"/>
</dbReference>
<dbReference type="IntAct" id="Q8H118">
    <property type="interactions" value="1"/>
</dbReference>
<dbReference type="GlyGen" id="Q8H118">
    <property type="glycosylation" value="1 site"/>
</dbReference>
<dbReference type="PaxDb" id="3702-AT3G23300.1"/>
<dbReference type="ProteomicsDB" id="234785"/>
<dbReference type="EnsemblPlants" id="AT3G23300.1">
    <property type="protein sequence ID" value="AT3G23300.1"/>
    <property type="gene ID" value="AT3G23300"/>
</dbReference>
<dbReference type="EnsemblPlants" id="AT3G23300.2">
    <property type="protein sequence ID" value="AT3G23300.2"/>
    <property type="gene ID" value="AT3G23300"/>
</dbReference>
<dbReference type="GeneID" id="821910"/>
<dbReference type="Gramene" id="AT3G23300.1">
    <property type="protein sequence ID" value="AT3G23300.1"/>
    <property type="gene ID" value="AT3G23300"/>
</dbReference>
<dbReference type="Gramene" id="AT3G23300.2">
    <property type="protein sequence ID" value="AT3G23300.2"/>
    <property type="gene ID" value="AT3G23300"/>
</dbReference>
<dbReference type="KEGG" id="ath:AT3G23300"/>
<dbReference type="Araport" id="AT3G23300"/>
<dbReference type="TAIR" id="AT3G23300"/>
<dbReference type="eggNOG" id="ENOG502QTWS">
    <property type="taxonomic scope" value="Eukaryota"/>
</dbReference>
<dbReference type="HOGENOM" id="CLU_010485_2_2_1"/>
<dbReference type="InParanoid" id="Q8H118"/>
<dbReference type="OMA" id="VGRMCWT"/>
<dbReference type="OrthoDB" id="2013972at2759"/>
<dbReference type="PhylomeDB" id="Q8H118"/>
<dbReference type="CD-CODE" id="4299E36E">
    <property type="entry name" value="Nucleolus"/>
</dbReference>
<dbReference type="PRO" id="PR:Q8H118"/>
<dbReference type="Proteomes" id="UP000006548">
    <property type="component" value="Chromosome 3"/>
</dbReference>
<dbReference type="ExpressionAtlas" id="Q8H118">
    <property type="expression patterns" value="baseline and differential"/>
</dbReference>
<dbReference type="GO" id="GO:0005768">
    <property type="term" value="C:endosome"/>
    <property type="evidence" value="ECO:0007005"/>
    <property type="project" value="TAIR"/>
</dbReference>
<dbReference type="GO" id="GO:0005794">
    <property type="term" value="C:Golgi apparatus"/>
    <property type="evidence" value="ECO:0007005"/>
    <property type="project" value="TAIR"/>
</dbReference>
<dbReference type="GO" id="GO:0005797">
    <property type="term" value="C:Golgi medial cisterna"/>
    <property type="evidence" value="ECO:0007005"/>
    <property type="project" value="TAIR"/>
</dbReference>
<dbReference type="GO" id="GO:0000139">
    <property type="term" value="C:Golgi membrane"/>
    <property type="evidence" value="ECO:0007669"/>
    <property type="project" value="UniProtKB-SubCell"/>
</dbReference>
<dbReference type="GO" id="GO:0005634">
    <property type="term" value="C:nucleus"/>
    <property type="evidence" value="ECO:0007005"/>
    <property type="project" value="TAIR"/>
</dbReference>
<dbReference type="GO" id="GO:0000325">
    <property type="term" value="C:plant-type vacuole"/>
    <property type="evidence" value="ECO:0007005"/>
    <property type="project" value="TAIR"/>
</dbReference>
<dbReference type="GO" id="GO:0005802">
    <property type="term" value="C:trans-Golgi network"/>
    <property type="evidence" value="ECO:0007005"/>
    <property type="project" value="TAIR"/>
</dbReference>
<dbReference type="GO" id="GO:0008168">
    <property type="term" value="F:methyltransferase activity"/>
    <property type="evidence" value="ECO:0007669"/>
    <property type="project" value="UniProtKB-KW"/>
</dbReference>
<dbReference type="GO" id="GO:0032259">
    <property type="term" value="P:methylation"/>
    <property type="evidence" value="ECO:0007669"/>
    <property type="project" value="UniProtKB-KW"/>
</dbReference>
<dbReference type="FunFam" id="3.40.50.150:FF:000043">
    <property type="entry name" value="probable methyltransferase PMT3"/>
    <property type="match status" value="1"/>
</dbReference>
<dbReference type="Gene3D" id="3.40.50.150">
    <property type="entry name" value="Vaccinia Virus protein VP39"/>
    <property type="match status" value="1"/>
</dbReference>
<dbReference type="InterPro" id="IPR004159">
    <property type="entry name" value="Put_SAM_MeTrfase"/>
</dbReference>
<dbReference type="InterPro" id="IPR029063">
    <property type="entry name" value="SAM-dependent_MTases_sf"/>
</dbReference>
<dbReference type="PANTHER" id="PTHR10108:SF1152">
    <property type="entry name" value="METHYLTRANSFERASE PMT1-RELATED"/>
    <property type="match status" value="1"/>
</dbReference>
<dbReference type="PANTHER" id="PTHR10108">
    <property type="entry name" value="SAM-DEPENDENT METHYLTRANSFERASE"/>
    <property type="match status" value="1"/>
</dbReference>
<dbReference type="Pfam" id="PF03141">
    <property type="entry name" value="Methyltransf_29"/>
    <property type="match status" value="1"/>
</dbReference>
<dbReference type="SUPFAM" id="SSF53335">
    <property type="entry name" value="S-adenosyl-L-methionine-dependent methyltransferases"/>
    <property type="match status" value="2"/>
</dbReference>
<keyword id="KW-0325">Glycoprotein</keyword>
<keyword id="KW-0333">Golgi apparatus</keyword>
<keyword id="KW-0472">Membrane</keyword>
<keyword id="KW-0489">Methyltransferase</keyword>
<keyword id="KW-1185">Reference proteome</keyword>
<keyword id="KW-0735">Signal-anchor</keyword>
<keyword id="KW-0808">Transferase</keyword>
<keyword id="KW-0812">Transmembrane</keyword>
<keyword id="KW-1133">Transmembrane helix</keyword>
<sequence length="611" mass="69356">MRGRSEGGKKKPVIVLLCVASVVLVFVYLFFGSSNHKAIEYGRKLGLGGDDDDSTKKDDTSSSFYVEDVVGNGFTPRSFPVCDDRHSELIPCLDRNLIYQMRLKLDLSLMEHYERHCPPPERRFNCLIPPPPGYKIPIKWPKSRDEVWKVNIPHTHLAHEKSDQNWMVVKGEKINFPGGGTHFHYGADKYIASMANMLNFPNNVLNNGGRLRTFLDVGCGVASFGGYLLASEIMTMSLAPNDVHQNQIQFALERGIPAYLGVLGTKRLPYPSRSFELAHCSRCRIDWLQRDGILLLELDRVLRPGGYFAYSSPEAYAQDEEDLRIWREMSALVGRMCWTIAAKRNQTVIWQKPLTNDCYLGREPGTQPPLCNSDSDPDAVYGVNMEACITQYSDHDHKTKGSGLAPWPARLTSPPPRLADFGYSTDIFEKDTETWRQRVDTYWDLLSPKIQSDTVRNIMDMKASMGSFAAALKEKDVWVMNVVPEDGPNTLKLIYDRGLMGAVHSWCEAFSTYPRTYDLLHAWDIISDIKKRGCSAEDLLLEMDRILRPSGFILIRDKQSVVDLVKKYLKALHWEAVETKTASESDQDSDNVILIVQKKLWLTSESLRDLE</sequence>
<gene>
    <name type="ordered locus">At3g23300</name>
    <name type="ORF">MLM24.3</name>
</gene>
<reference key="1">
    <citation type="journal article" date="2000" name="DNA Res.">
        <title>Structural analysis of Arabidopsis thaliana chromosome 3. I. Sequence features of the regions of 4,504,864 bp covered by sixty P1 and TAC clones.</title>
        <authorList>
            <person name="Sato S."/>
            <person name="Nakamura Y."/>
            <person name="Kaneko T."/>
            <person name="Katoh T."/>
            <person name="Asamizu E."/>
            <person name="Tabata S."/>
        </authorList>
    </citation>
    <scope>NUCLEOTIDE SEQUENCE [LARGE SCALE GENOMIC DNA]</scope>
    <source>
        <strain>cv. Columbia</strain>
    </source>
</reference>
<reference key="2">
    <citation type="journal article" date="2017" name="Plant J.">
        <title>Araport11: a complete reannotation of the Arabidopsis thaliana reference genome.</title>
        <authorList>
            <person name="Cheng C.Y."/>
            <person name="Krishnakumar V."/>
            <person name="Chan A.P."/>
            <person name="Thibaud-Nissen F."/>
            <person name="Schobel S."/>
            <person name="Town C.D."/>
        </authorList>
    </citation>
    <scope>GENOME REANNOTATION</scope>
    <source>
        <strain>cv. Columbia</strain>
    </source>
</reference>
<reference key="3">
    <citation type="journal article" date="2003" name="Science">
        <title>Empirical analysis of transcriptional activity in the Arabidopsis genome.</title>
        <authorList>
            <person name="Yamada K."/>
            <person name="Lim J."/>
            <person name="Dale J.M."/>
            <person name="Chen H."/>
            <person name="Shinn P."/>
            <person name="Palm C.J."/>
            <person name="Southwick A.M."/>
            <person name="Wu H.C."/>
            <person name="Kim C.J."/>
            <person name="Nguyen M."/>
            <person name="Pham P.K."/>
            <person name="Cheuk R.F."/>
            <person name="Karlin-Newmann G."/>
            <person name="Liu S.X."/>
            <person name="Lam B."/>
            <person name="Sakano H."/>
            <person name="Wu T."/>
            <person name="Yu G."/>
            <person name="Miranda M."/>
            <person name="Quach H.L."/>
            <person name="Tripp M."/>
            <person name="Chang C.H."/>
            <person name="Lee J.M."/>
            <person name="Toriumi M.J."/>
            <person name="Chan M.M."/>
            <person name="Tang C.C."/>
            <person name="Onodera C.S."/>
            <person name="Deng J.M."/>
            <person name="Akiyama K."/>
            <person name="Ansari Y."/>
            <person name="Arakawa T."/>
            <person name="Banh J."/>
            <person name="Banno F."/>
            <person name="Bowser L."/>
            <person name="Brooks S.Y."/>
            <person name="Carninci P."/>
            <person name="Chao Q."/>
            <person name="Choy N."/>
            <person name="Enju A."/>
            <person name="Goldsmith A.D."/>
            <person name="Gurjal M."/>
            <person name="Hansen N.F."/>
            <person name="Hayashizaki Y."/>
            <person name="Johnson-Hopson C."/>
            <person name="Hsuan V.W."/>
            <person name="Iida K."/>
            <person name="Karnes M."/>
            <person name="Khan S."/>
            <person name="Koesema E."/>
            <person name="Ishida J."/>
            <person name="Jiang P.X."/>
            <person name="Jones T."/>
            <person name="Kawai J."/>
            <person name="Kamiya A."/>
            <person name="Meyers C."/>
            <person name="Nakajima M."/>
            <person name="Narusaka M."/>
            <person name="Seki M."/>
            <person name="Sakurai T."/>
            <person name="Satou M."/>
            <person name="Tamse R."/>
            <person name="Vaysberg M."/>
            <person name="Wallender E.K."/>
            <person name="Wong C."/>
            <person name="Yamamura Y."/>
            <person name="Yuan S."/>
            <person name="Shinozaki K."/>
            <person name="Davis R.W."/>
            <person name="Theologis A."/>
            <person name="Ecker J.R."/>
        </authorList>
    </citation>
    <scope>NUCLEOTIDE SEQUENCE [LARGE SCALE MRNA] OF 236-611</scope>
    <source>
        <strain>cv. Columbia</strain>
    </source>
</reference>
<reference key="4">
    <citation type="journal article" date="2007" name="Plant J.">
        <title>Homogalacturonan synthesis in Arabidopsis thaliana requires a Golgi-localized protein with a putative methyltransferase domain.</title>
        <authorList>
            <person name="Mouille G."/>
            <person name="Ralet M.C."/>
            <person name="Cavelier C."/>
            <person name="Eland C."/>
            <person name="Effroy D."/>
            <person name="Hematy K."/>
            <person name="McCartney L."/>
            <person name="Truong H.N."/>
            <person name="Gaudon V."/>
            <person name="Thibault J.F."/>
            <person name="Marchant A."/>
            <person name="Hofte H."/>
        </authorList>
    </citation>
    <scope>GENE FAMILY</scope>
</reference>
<reference key="5">
    <citation type="journal article" date="2007" name="Plant J.">
        <title>The TUMOROUS SHOOT DEVELOPMENT2 gene of Arabidopsis encoding a putative methyltransferase is required for cell adhesion and co-ordinated plant development.</title>
        <authorList>
            <person name="Krupkova E."/>
            <person name="Immerzeel P."/>
            <person name="Pauly M."/>
            <person name="Schmulling T."/>
        </authorList>
    </citation>
    <scope>GENE FAMILY</scope>
</reference>
<protein>
    <recommendedName>
        <fullName>Probable methyltransferase PMT1</fullName>
        <ecNumber>2.1.1.-</ecNumber>
    </recommendedName>
</protein>
<accession>Q8H118</accession>
<accession>Q93VT5</accession>
<accession>Q9LW67</accession>
<organism>
    <name type="scientific">Arabidopsis thaliana</name>
    <name type="common">Mouse-ear cress</name>
    <dbReference type="NCBI Taxonomy" id="3702"/>
    <lineage>
        <taxon>Eukaryota</taxon>
        <taxon>Viridiplantae</taxon>
        <taxon>Streptophyta</taxon>
        <taxon>Embryophyta</taxon>
        <taxon>Tracheophyta</taxon>
        <taxon>Spermatophyta</taxon>
        <taxon>Magnoliopsida</taxon>
        <taxon>eudicotyledons</taxon>
        <taxon>Gunneridae</taxon>
        <taxon>Pentapetalae</taxon>
        <taxon>rosids</taxon>
        <taxon>malvids</taxon>
        <taxon>Brassicales</taxon>
        <taxon>Brassicaceae</taxon>
        <taxon>Camelineae</taxon>
        <taxon>Arabidopsis</taxon>
    </lineage>
</organism>
<feature type="chain" id="PRO_0000393241" description="Probable methyltransferase PMT1">
    <location>
        <begin position="1"/>
        <end position="611"/>
    </location>
</feature>
<feature type="topological domain" description="Cytoplasmic" evidence="1">
    <location>
        <begin position="1"/>
        <end position="11"/>
    </location>
</feature>
<feature type="transmembrane region" description="Helical; Signal-anchor for type II membrane protein" evidence="1">
    <location>
        <begin position="12"/>
        <end position="32"/>
    </location>
</feature>
<feature type="topological domain" description="Lumenal" evidence="1">
    <location>
        <begin position="33"/>
        <end position="611"/>
    </location>
</feature>
<feature type="glycosylation site" description="N-linked (GlcNAc...) asparagine" evidence="1">
    <location>
        <position position="345"/>
    </location>
</feature>